<organism>
    <name type="scientific">Caenorhabditis elegans</name>
    <dbReference type="NCBI Taxonomy" id="6239"/>
    <lineage>
        <taxon>Eukaryota</taxon>
        <taxon>Metazoa</taxon>
        <taxon>Ecdysozoa</taxon>
        <taxon>Nematoda</taxon>
        <taxon>Chromadorea</taxon>
        <taxon>Rhabditida</taxon>
        <taxon>Rhabditina</taxon>
        <taxon>Rhabditomorpha</taxon>
        <taxon>Rhabditoidea</taxon>
        <taxon>Rhabditidae</taxon>
        <taxon>Peloderinae</taxon>
        <taxon>Caenorhabditis</taxon>
    </lineage>
</organism>
<reference key="1">
    <citation type="journal article" date="1998" name="Science">
        <title>Genome sequence of the nematode C. elegans: a platform for investigating biology.</title>
        <authorList>
            <consortium name="The C. elegans sequencing consortium"/>
        </authorList>
    </citation>
    <scope>NUCLEOTIDE SEQUENCE [LARGE SCALE GENOMIC DNA]</scope>
    <source>
        <strain>Bristol N2</strain>
    </source>
</reference>
<comment type="function">
    <text evidence="1 2">Component of the small ribosomal subunit. The ribosome is a large ribonucleoprotein complex responsible for the synthesis of proteins in the cell (By similarity). Part of the small subunit (SSU) processome, first precursor of the small eukaryotic ribosomal subunit. During the assembly of the SSU processome in the nucleolus, many ribosome biogenesis factors, an RNA chaperone and ribosomal proteins associate with the nascent pre-rRNA and work in concert to generate RNA folding, modifications, rearrangements and cleavage as well as targeted degradation of pre-ribosomal RNA by the RNA exosome (By similarity).</text>
</comment>
<comment type="subunit">
    <text evidence="1 2">Component of the small ribosomal subunit (By similarity). Part of the small subunit (SSU) processome, composed of more than 70 proteins and the RNA chaperone small nucleolar RNA (snoRNA) U3 (By similarity).</text>
</comment>
<comment type="subcellular location">
    <subcellularLocation>
        <location evidence="2">Cytoplasm</location>
    </subcellularLocation>
    <subcellularLocation>
        <location evidence="1">Nucleus</location>
        <location evidence="1">Nucleolus</location>
    </subcellularLocation>
</comment>
<comment type="similarity">
    <text evidence="3">Belongs to the universal ribosomal protein uS7 family.</text>
</comment>
<accession>P49041</accession>
<gene>
    <name type="primary">rps-5</name>
    <name type="ORF">T05E11.1</name>
</gene>
<protein>
    <recommendedName>
        <fullName evidence="3">Small ribosomal subunit protein uS7</fullName>
    </recommendedName>
    <alternativeName>
        <fullName>40S ribosomal protein S5</fullName>
    </alternativeName>
</protein>
<feature type="chain" id="PRO_0000124529" description="Small ribosomal subunit protein uS7">
    <location>
        <begin position="1"/>
        <end position="210"/>
    </location>
</feature>
<keyword id="KW-0002">3D-structure</keyword>
<keyword id="KW-0963">Cytoplasm</keyword>
<keyword id="KW-0539">Nucleus</keyword>
<keyword id="KW-1185">Reference proteome</keyword>
<keyword id="KW-0687">Ribonucleoprotein</keyword>
<keyword id="KW-0689">Ribosomal protein</keyword>
<proteinExistence type="evidence at protein level"/>
<name>RS5_CAEEL</name>
<dbReference type="EMBL" id="Z68751">
    <property type="protein sequence ID" value="CAA92971.1"/>
    <property type="molecule type" value="Genomic_DNA"/>
</dbReference>
<dbReference type="PIR" id="T24519">
    <property type="entry name" value="T24519"/>
</dbReference>
<dbReference type="RefSeq" id="NP_502077.1">
    <property type="nucleotide sequence ID" value="NM_069676.6"/>
</dbReference>
<dbReference type="PDB" id="9BH5">
    <property type="method" value="EM"/>
    <property type="resolution" value="2.63 A"/>
    <property type="chains" value="AF=1-210"/>
</dbReference>
<dbReference type="PDB" id="9CAI">
    <property type="method" value="EM"/>
    <property type="resolution" value="2.59 A"/>
    <property type="chains" value="AF=1-210"/>
</dbReference>
<dbReference type="PDBsum" id="9BH5"/>
<dbReference type="PDBsum" id="9CAI"/>
<dbReference type="EMDB" id="EMD-44533"/>
<dbReference type="EMDB" id="EMD-45392"/>
<dbReference type="SMR" id="P49041"/>
<dbReference type="BioGRID" id="43111">
    <property type="interactions" value="105"/>
</dbReference>
<dbReference type="DIP" id="DIP-27472N"/>
<dbReference type="FunCoup" id="P49041">
    <property type="interactions" value="2105"/>
</dbReference>
<dbReference type="IntAct" id="P49041">
    <property type="interactions" value="1"/>
</dbReference>
<dbReference type="STRING" id="6239.T05E11.1.1"/>
<dbReference type="iPTMnet" id="P49041"/>
<dbReference type="PaxDb" id="6239-T05E11.1"/>
<dbReference type="PeptideAtlas" id="P49041"/>
<dbReference type="EnsemblMetazoa" id="T05E11.1.1">
    <property type="protein sequence ID" value="T05E11.1.1"/>
    <property type="gene ID" value="WBGene00004474"/>
</dbReference>
<dbReference type="GeneID" id="178012"/>
<dbReference type="KEGG" id="cel:CELE_T05E11.1"/>
<dbReference type="UCSC" id="T05E11.1.1">
    <property type="organism name" value="c. elegans"/>
</dbReference>
<dbReference type="AGR" id="WB:WBGene00004474"/>
<dbReference type="CTD" id="178012"/>
<dbReference type="WormBase" id="T05E11.1">
    <property type="protein sequence ID" value="CE06360"/>
    <property type="gene ID" value="WBGene00004474"/>
    <property type="gene designation" value="rps-5"/>
</dbReference>
<dbReference type="eggNOG" id="KOG3291">
    <property type="taxonomic scope" value="Eukaryota"/>
</dbReference>
<dbReference type="GeneTree" id="ENSGT00390000010806"/>
<dbReference type="HOGENOM" id="CLU_063975_0_0_1"/>
<dbReference type="InParanoid" id="P49041"/>
<dbReference type="OMA" id="QANEWPE"/>
<dbReference type="OrthoDB" id="10264639at2759"/>
<dbReference type="PhylomeDB" id="P49041"/>
<dbReference type="Reactome" id="R-CEL-156827">
    <property type="pathway name" value="L13a-mediated translational silencing of Ceruloplasmin expression"/>
</dbReference>
<dbReference type="Reactome" id="R-CEL-1799339">
    <property type="pathway name" value="SRP-dependent cotranslational protein targeting to membrane"/>
</dbReference>
<dbReference type="Reactome" id="R-CEL-72649">
    <property type="pathway name" value="Translation initiation complex formation"/>
</dbReference>
<dbReference type="Reactome" id="R-CEL-72689">
    <property type="pathway name" value="Formation of a pool of free 40S subunits"/>
</dbReference>
<dbReference type="Reactome" id="R-CEL-72695">
    <property type="pathway name" value="Formation of the ternary complex, and subsequently, the 43S complex"/>
</dbReference>
<dbReference type="Reactome" id="R-CEL-72702">
    <property type="pathway name" value="Ribosomal scanning and start codon recognition"/>
</dbReference>
<dbReference type="Reactome" id="R-CEL-72706">
    <property type="pathway name" value="GTP hydrolysis and joining of the 60S ribosomal subunit"/>
</dbReference>
<dbReference type="Reactome" id="R-CEL-975956">
    <property type="pathway name" value="Nonsense Mediated Decay (NMD) independent of the Exon Junction Complex (EJC)"/>
</dbReference>
<dbReference type="Reactome" id="R-CEL-975957">
    <property type="pathway name" value="Nonsense Mediated Decay (NMD) enhanced by the Exon Junction Complex (EJC)"/>
</dbReference>
<dbReference type="PRO" id="PR:P49041"/>
<dbReference type="Proteomes" id="UP000001940">
    <property type="component" value="Chromosome IV"/>
</dbReference>
<dbReference type="Bgee" id="WBGene00004474">
    <property type="expression patterns" value="Expressed in germ line (C elegans) and 4 other cell types or tissues"/>
</dbReference>
<dbReference type="GO" id="GO:0022627">
    <property type="term" value="C:cytosolic small ribosomal subunit"/>
    <property type="evidence" value="ECO:0000318"/>
    <property type="project" value="GO_Central"/>
</dbReference>
<dbReference type="GO" id="GO:0005730">
    <property type="term" value="C:nucleolus"/>
    <property type="evidence" value="ECO:0007669"/>
    <property type="project" value="UniProtKB-SubCell"/>
</dbReference>
<dbReference type="GO" id="GO:0005840">
    <property type="term" value="C:ribosome"/>
    <property type="evidence" value="ECO:0000318"/>
    <property type="project" value="GO_Central"/>
</dbReference>
<dbReference type="GO" id="GO:0032040">
    <property type="term" value="C:small-subunit processome"/>
    <property type="evidence" value="ECO:0000250"/>
    <property type="project" value="UniProtKB"/>
</dbReference>
<dbReference type="GO" id="GO:0003729">
    <property type="term" value="F:mRNA binding"/>
    <property type="evidence" value="ECO:0000318"/>
    <property type="project" value="GO_Central"/>
</dbReference>
<dbReference type="GO" id="GO:0019843">
    <property type="term" value="F:rRNA binding"/>
    <property type="evidence" value="ECO:0000318"/>
    <property type="project" value="GO_Central"/>
</dbReference>
<dbReference type="GO" id="GO:0003735">
    <property type="term" value="F:structural constituent of ribosome"/>
    <property type="evidence" value="ECO:0000318"/>
    <property type="project" value="GO_Central"/>
</dbReference>
<dbReference type="GO" id="GO:0000028">
    <property type="term" value="P:ribosomal small subunit assembly"/>
    <property type="evidence" value="ECO:0000318"/>
    <property type="project" value="GO_Central"/>
</dbReference>
<dbReference type="GO" id="GO:0042274">
    <property type="term" value="P:ribosomal small subunit biogenesis"/>
    <property type="evidence" value="ECO:0000250"/>
    <property type="project" value="UniProtKB"/>
</dbReference>
<dbReference type="GO" id="GO:0006412">
    <property type="term" value="P:translation"/>
    <property type="evidence" value="ECO:0000318"/>
    <property type="project" value="GO_Central"/>
</dbReference>
<dbReference type="CDD" id="cd14867">
    <property type="entry name" value="uS7_Eukaryote"/>
    <property type="match status" value="1"/>
</dbReference>
<dbReference type="FunFam" id="1.10.455.10:FF:000002">
    <property type="entry name" value="40S ribosomal protein S5"/>
    <property type="match status" value="1"/>
</dbReference>
<dbReference type="Gene3D" id="1.10.455.10">
    <property type="entry name" value="Ribosomal protein S7 domain"/>
    <property type="match status" value="1"/>
</dbReference>
<dbReference type="InterPro" id="IPR000235">
    <property type="entry name" value="Ribosomal_uS7"/>
</dbReference>
<dbReference type="InterPro" id="IPR020606">
    <property type="entry name" value="Ribosomal_uS7_CS"/>
</dbReference>
<dbReference type="InterPro" id="IPR023798">
    <property type="entry name" value="Ribosomal_uS7_dom"/>
</dbReference>
<dbReference type="InterPro" id="IPR036823">
    <property type="entry name" value="Ribosomal_uS7_dom_sf"/>
</dbReference>
<dbReference type="InterPro" id="IPR005716">
    <property type="entry name" value="Ribosomal_uS7_euk/arc"/>
</dbReference>
<dbReference type="NCBIfam" id="NF003106">
    <property type="entry name" value="PRK04027.1"/>
    <property type="match status" value="1"/>
</dbReference>
<dbReference type="NCBIfam" id="TIGR01028">
    <property type="entry name" value="uS7_euk_arch"/>
    <property type="match status" value="1"/>
</dbReference>
<dbReference type="PANTHER" id="PTHR11205">
    <property type="entry name" value="RIBOSOMAL PROTEIN S7"/>
    <property type="match status" value="1"/>
</dbReference>
<dbReference type="Pfam" id="PF00177">
    <property type="entry name" value="Ribosomal_S7"/>
    <property type="match status" value="1"/>
</dbReference>
<dbReference type="PIRSF" id="PIRSF002122">
    <property type="entry name" value="RPS7p_RPS7a_RPS5e_RPS7o"/>
    <property type="match status" value="1"/>
</dbReference>
<dbReference type="SUPFAM" id="SSF47973">
    <property type="entry name" value="Ribosomal protein S7"/>
    <property type="match status" value="1"/>
</dbReference>
<dbReference type="PROSITE" id="PS00052">
    <property type="entry name" value="RIBOSOMAL_S7"/>
    <property type="match status" value="1"/>
</dbReference>
<evidence type="ECO:0000250" key="1">
    <source>
        <dbReference type="UniProtKB" id="P46782"/>
    </source>
</evidence>
<evidence type="ECO:0000250" key="2">
    <source>
        <dbReference type="UniProtKB" id="P97461"/>
    </source>
</evidence>
<evidence type="ECO:0000305" key="3"/>
<sequence>MADNWGSENVVADAAPATEAPEVALFGKWSLQSVNVSDISLVDYIPVKEKSAKYLPHSAGRFQVRRFRKAACPIVERLANSLMMHGRNNGKKLMTVRIVKHAFEIIYLLTGENPVQVLVNAVINSGPREDSTRIGRAGTVRRQAVDVAPLRRVNQAIWLLCTGAREAAFRNVKTIAECLADELINAAKGSSNSYAIKKKDELERVAKSNR</sequence>